<sequence>MNNVTERYVLDLQEIDESQVAVVGGKGAHLGSLSRIEGIRVPAGFCVTTDAYRRVVAQSPSLDAQLEELSRVSPDDQEAIRTLSAEIRRTVEEIAVPDDLAGAITRALARSGERTAYAVRSSATAEDLPTASFAGQQDTYLNVVGPAAILRHISRCWASLFTERAVTYRRRNGIDDRTVRMAVVVQQMVFPHASGILFTADPVSGNRTVATVDAGFGLGEALVSGLVNPDVFKVRHGEVVARTISAKQREVHALLAGGTREVPIDAQRQQQPALTDAQAVRLVELGRRIEARFGRPQDIEWCLVDDDFHIVQSRPITTLFPVPESADQENHVYVSVGHQQMMTDPMKPLGLSMWQQTAMVRMHEAGGRLFVDVTQRLAAPASRAGLLDLMGRGDPLVRDALETVLDREDFVPSLPDAPPAGPRAGAAPEPVATDPAVVTGLIERSQASLAALRRDVLTKTGPELFDFLPTAFEEHKRVLTDPLNFKAIMAGMEATWWLNDKLEEWLGEKNAADTLTLSAPGNVTSEMGLALLDVADVIRPHPQVVEFLAGVEDDDFLDELAKVPGGTEARDAIEAYLDRYGMRCVGEIDITRPRWSERPGTLVPVILDNVRNFEPGAARRRFEQGLQQARKKEQEVLSRLRALPDGERKADETKGMIDRVRTFIGYREYPKYDIISRYFVYKQALMAEAERLAQAGVLAEKEDVFYLTFEEFHDVVRTRQIDDRLVRQRKDAFRAYQALTPPRVLTSDGEALTGAYRRDDVPDGALIGLPVSTGTVEGRARVILDMAEADLEAGDILVTTFTDPSWSPLFVAVAGLVTEVGGLMTHGAVIAREYGLPAVVGVEQATRRIRDGQRIRVHGTDGYIEILS</sequence>
<accession>B5I920</accession>
<protein>
    <recommendedName>
        <fullName evidence="5">Rifampicin phosphotransferase</fullName>
        <ecNumber evidence="3">2.7.9.6</ecNumber>
    </recommendedName>
    <alternativeName>
        <fullName evidence="5">Rifampin phosphotransferase</fullName>
        <shortName evidence="4">RIF phosphotransferase</shortName>
    </alternativeName>
</protein>
<name>RPH_STRX2</name>
<evidence type="ECO:0000250" key="1">
    <source>
        <dbReference type="UniProtKB" id="A0A0X1KHF9"/>
    </source>
</evidence>
<evidence type="ECO:0000256" key="2">
    <source>
        <dbReference type="SAM" id="MobiDB-lite"/>
    </source>
</evidence>
<evidence type="ECO:0000269" key="3">
    <source>
    </source>
</evidence>
<evidence type="ECO:0000303" key="4">
    <source>
    </source>
</evidence>
<evidence type="ECO:0000305" key="5"/>
<evidence type="ECO:0000312" key="6">
    <source>
        <dbReference type="EMBL" id="EDY61575.1"/>
    </source>
</evidence>
<comment type="function">
    <text evidence="3">Catalyzes the phosphorylation of rifampicin, also known as rifampin (RIF), leading to its inactivation (PubMed:24778229). Confers high level resistance to a variety of clinically used rifamycin antibiotics (PubMed:24778229). Does not show phosphoenolpyruvate (PEP) synthase activity (PubMed:24778229).</text>
</comment>
<comment type="catalytic activity">
    <reaction evidence="3">
        <text>rifampicin + ATP + H2O = 21-phosphorifampicin + AMP + phosphate + 2 H(+)</text>
        <dbReference type="Rhea" id="RHEA:56304"/>
        <dbReference type="ChEBI" id="CHEBI:15377"/>
        <dbReference type="ChEBI" id="CHEBI:15378"/>
        <dbReference type="ChEBI" id="CHEBI:30616"/>
        <dbReference type="ChEBI" id="CHEBI:43474"/>
        <dbReference type="ChEBI" id="CHEBI:71365"/>
        <dbReference type="ChEBI" id="CHEBI:140195"/>
        <dbReference type="ChEBI" id="CHEBI:456215"/>
        <dbReference type="EC" id="2.7.9.6"/>
    </reaction>
    <physiologicalReaction direction="left-to-right" evidence="3">
        <dbReference type="Rhea" id="RHEA:56305"/>
    </physiologicalReaction>
</comment>
<comment type="biophysicochemical properties">
    <kinetics>
        <KM evidence="3">0.12 uM for RIF</KM>
        <KM evidence="3">11.07 uM for ATP</KM>
        <text evidence="3">kcat is 0.53 sec(-1).</text>
    </kinetics>
</comment>
<comment type="domain">
    <text evidence="1">Contains three domains: an N-terminal ATP-binding domain, a large central rifampicin (RIF)-binding domain and a small C-terminal swivel phosphohistidine domain that harbors the conserved histidine residue essential for phosphate transfer.</text>
</comment>
<comment type="disruption phenotype">
    <text evidence="3">Disruption mutant fails to inactivate RIF (PubMed:24778229). Mutant displays a modest twofold decrease in RIF minimum inhibitory concentrations (MICs) compared with the wild-type strain (PubMed:24778229).</text>
</comment>
<comment type="similarity">
    <text evidence="5">Belongs to the rifampicin phosphotransferase family.</text>
</comment>
<organism>
    <name type="scientific">Streptomyces sviceus (strain ATCC 29083 / DSM 924 / JCM 4929 / NBRC 13980 / NCIMB 11184 / NRRL 5439 / UC 5370)</name>
    <dbReference type="NCBI Taxonomy" id="463191"/>
    <lineage>
        <taxon>Bacteria</taxon>
        <taxon>Bacillati</taxon>
        <taxon>Actinomycetota</taxon>
        <taxon>Actinomycetes</taxon>
        <taxon>Kitasatosporales</taxon>
        <taxon>Streptomycetaceae</taxon>
        <taxon>Streptomyces</taxon>
    </lineage>
</organism>
<gene>
    <name evidence="4" type="primary">rph</name>
    <name evidence="4" type="synonym">rph-Ss</name>
    <name evidence="6" type="ORF">SSEG_08155</name>
</gene>
<keyword id="KW-0046">Antibiotic resistance</keyword>
<keyword id="KW-0067">ATP-binding</keyword>
<keyword id="KW-0418">Kinase</keyword>
<keyword id="KW-0547">Nucleotide-binding</keyword>
<keyword id="KW-0808">Transferase</keyword>
<reference key="1">
    <citation type="submission" date="2009-10" db="EMBL/GenBank/DDBJ databases">
        <title>The genome sequence of Streptomyces sviceus strain ATCC 29083.</title>
        <authorList>
            <consortium name="The Broad Institute Genome Sequencing Platform"/>
            <consortium name="Broad Institute Microbial Sequencing Center"/>
            <person name="Fischbach M."/>
            <person name="Godfrey P."/>
            <person name="Ward D."/>
            <person name="Young S."/>
            <person name="Zeng Q."/>
            <person name="Koehrsen M."/>
            <person name="Alvarado L."/>
            <person name="Berlin A.M."/>
            <person name="Bochicchio J."/>
            <person name="Borenstein D."/>
            <person name="Chapman S.B."/>
            <person name="Chen Z."/>
            <person name="Engels R."/>
            <person name="Freedman E."/>
            <person name="Gellesch M."/>
            <person name="Goldberg J."/>
            <person name="Griggs A."/>
            <person name="Gujja S."/>
            <person name="Heilman E.R."/>
            <person name="Heiman D.I."/>
            <person name="Hepburn T.A."/>
            <person name="Howarth C."/>
            <person name="Jen D."/>
            <person name="Larson L."/>
            <person name="Lewis B."/>
            <person name="Mehta T."/>
            <person name="Park D."/>
            <person name="Pearson M."/>
            <person name="Richards J."/>
            <person name="Roberts A."/>
            <person name="Saif S."/>
            <person name="Shea T.D."/>
            <person name="Shenoy N."/>
            <person name="Sisk P."/>
            <person name="Stolte C."/>
            <person name="Sykes S.N."/>
            <person name="Thomson T."/>
            <person name="Walk T."/>
            <person name="White J."/>
            <person name="Yandava C."/>
            <person name="Straight P."/>
            <person name="Clardy J."/>
            <person name="Hung D."/>
            <person name="Kolter R."/>
            <person name="Mekalanos J."/>
            <person name="Walker S."/>
            <person name="Walsh C.T."/>
            <person name="Wieland-Brown L.C."/>
            <person name="Haas B."/>
            <person name="Nusbaum C."/>
            <person name="Birren B."/>
        </authorList>
    </citation>
    <scope>NUCLEOTIDE SEQUENCE [LARGE SCALE GENOMIC DNA]</scope>
    <source>
        <strain>ATCC 29083 / DSM 924 / JCM 4929 / NBRC 13980 / NCIMB 11184 / NRRL 5439 / UC 5370</strain>
    </source>
</reference>
<reference key="2">
    <citation type="journal article" date="2014" name="Proc. Natl. Acad. Sci. U.S.A.">
        <title>A rifamycin inactivating phosphotransferase family shared by environmental and pathogenic bacteria.</title>
        <authorList>
            <person name="Spanogiannopoulos P."/>
            <person name="Waglechner N."/>
            <person name="Koteva K."/>
            <person name="Wright G.D."/>
        </authorList>
    </citation>
    <scope>FUNCTION</scope>
    <scope>CATALYTIC ACTIVITY</scope>
    <scope>BIOPHYSICOCHEMICAL PROPERTIES</scope>
    <scope>DISRUPTION PHENOTYPE</scope>
    <source>
        <strain>ATCC 29083 / DSM 924 / JCM 4929 / NBRC 13980 / NCIMB 11184 / NRRL 5439 / UC 5370</strain>
    </source>
</reference>
<dbReference type="EC" id="2.7.9.6" evidence="3"/>
<dbReference type="EMBL" id="CM000951">
    <property type="protein sequence ID" value="EDY61575.1"/>
    <property type="molecule type" value="Genomic_DNA"/>
</dbReference>
<dbReference type="SMR" id="B5I920"/>
<dbReference type="STRING" id="463191.SSEG_08155"/>
<dbReference type="eggNOG" id="COG0574">
    <property type="taxonomic scope" value="Bacteria"/>
</dbReference>
<dbReference type="eggNOG" id="COG3848">
    <property type="taxonomic scope" value="Bacteria"/>
</dbReference>
<dbReference type="HOGENOM" id="CLU_005950_0_0_11"/>
<dbReference type="OrthoDB" id="9765468at2"/>
<dbReference type="Proteomes" id="UP000002785">
    <property type="component" value="Chromosome"/>
</dbReference>
<dbReference type="GO" id="GO:0005524">
    <property type="term" value="F:ATP binding"/>
    <property type="evidence" value="ECO:0007669"/>
    <property type="project" value="UniProtKB-KW"/>
</dbReference>
<dbReference type="GO" id="GO:0016301">
    <property type="term" value="F:kinase activity"/>
    <property type="evidence" value="ECO:0007669"/>
    <property type="project" value="UniProtKB-KW"/>
</dbReference>
<dbReference type="GO" id="GO:0046677">
    <property type="term" value="P:response to antibiotic"/>
    <property type="evidence" value="ECO:0007669"/>
    <property type="project" value="UniProtKB-KW"/>
</dbReference>
<dbReference type="FunFam" id="3.30.1490.20:FF:000010">
    <property type="entry name" value="Phosphoenolpyruvate synthase"/>
    <property type="match status" value="1"/>
</dbReference>
<dbReference type="FunFam" id="3.50.30.10:FF:000007">
    <property type="entry name" value="Phosphoenolpyruvate synthase"/>
    <property type="match status" value="1"/>
</dbReference>
<dbReference type="Gene3D" id="3.30.1490.20">
    <property type="entry name" value="ATP-grasp fold, A domain"/>
    <property type="match status" value="1"/>
</dbReference>
<dbReference type="Gene3D" id="3.30.470.20">
    <property type="entry name" value="ATP-grasp fold, B domain"/>
    <property type="match status" value="1"/>
</dbReference>
<dbReference type="Gene3D" id="3.50.30.10">
    <property type="entry name" value="Phosphohistidine domain"/>
    <property type="match status" value="1"/>
</dbReference>
<dbReference type="InterPro" id="IPR013815">
    <property type="entry name" value="ATP_grasp_subdomain_1"/>
</dbReference>
<dbReference type="InterPro" id="IPR008279">
    <property type="entry name" value="PEP-util_enz_mobile_dom"/>
</dbReference>
<dbReference type="InterPro" id="IPR051549">
    <property type="entry name" value="PEP_Utilizing_Enz"/>
</dbReference>
<dbReference type="InterPro" id="IPR036637">
    <property type="entry name" value="Phosphohistidine_dom_sf"/>
</dbReference>
<dbReference type="InterPro" id="IPR002192">
    <property type="entry name" value="PPDK_AMP/ATP-bd"/>
</dbReference>
<dbReference type="NCBIfam" id="NF004877">
    <property type="entry name" value="PRK06241.1-2"/>
    <property type="match status" value="1"/>
</dbReference>
<dbReference type="NCBIfam" id="NF004879">
    <property type="entry name" value="PRK06241.1-4"/>
    <property type="match status" value="1"/>
</dbReference>
<dbReference type="NCBIfam" id="NF041857">
    <property type="entry name" value="RIF_Ptrans_rph"/>
    <property type="match status" value="1"/>
</dbReference>
<dbReference type="PANTHER" id="PTHR43615">
    <property type="entry name" value="PHOSPHOENOLPYRUVATE SYNTHASE-RELATED"/>
    <property type="match status" value="1"/>
</dbReference>
<dbReference type="PANTHER" id="PTHR43615:SF1">
    <property type="entry name" value="PPDK_N DOMAIN-CONTAINING PROTEIN"/>
    <property type="match status" value="1"/>
</dbReference>
<dbReference type="Pfam" id="PF00391">
    <property type="entry name" value="PEP-utilizers"/>
    <property type="match status" value="1"/>
</dbReference>
<dbReference type="Pfam" id="PF01326">
    <property type="entry name" value="PPDK_N"/>
    <property type="match status" value="1"/>
</dbReference>
<dbReference type="SUPFAM" id="SSF56059">
    <property type="entry name" value="Glutathione synthetase ATP-binding domain-like"/>
    <property type="match status" value="1"/>
</dbReference>
<dbReference type="SUPFAM" id="SSF52009">
    <property type="entry name" value="Phosphohistidine domain"/>
    <property type="match status" value="1"/>
</dbReference>
<feature type="chain" id="PRO_0000459649" description="Rifampicin phosphotransferase">
    <location>
        <begin position="1"/>
        <end position="868"/>
    </location>
</feature>
<feature type="region of interest" description="ATP-binding" evidence="1">
    <location>
        <begin position="5"/>
        <end position="317"/>
    </location>
</feature>
<feature type="region of interest" description="Rifampicin-binding" evidence="1">
    <location>
        <begin position="330"/>
        <end position="755"/>
    </location>
</feature>
<feature type="region of interest" description="Disordered" evidence="2">
    <location>
        <begin position="410"/>
        <end position="430"/>
    </location>
</feature>
<feature type="region of interest" description="Swivel phosphohistidine" evidence="1">
    <location>
        <begin position="768"/>
        <end position="866"/>
    </location>
</feature>
<feature type="active site" description="Tele-phosphohistidine intermediate" evidence="1">
    <location>
        <position position="826"/>
    </location>
</feature>
<feature type="binding site" evidence="1">
    <location>
        <position position="26"/>
    </location>
    <ligand>
        <name>ATP</name>
        <dbReference type="ChEBI" id="CHEBI:30616"/>
    </ligand>
</feature>
<feature type="binding site" evidence="1">
    <location>
        <position position="120"/>
    </location>
    <ligand>
        <name>ATP</name>
        <dbReference type="ChEBI" id="CHEBI:30616"/>
    </ligand>
</feature>
<feature type="binding site" evidence="1">
    <location>
        <position position="135"/>
    </location>
    <ligand>
        <name>ATP</name>
        <dbReference type="ChEBI" id="CHEBI:30616"/>
    </ligand>
</feature>
<feature type="binding site" evidence="1">
    <location>
        <position position="139"/>
    </location>
    <ligand>
        <name>ATP</name>
        <dbReference type="ChEBI" id="CHEBI:30616"/>
    </ligand>
</feature>
<feature type="binding site" evidence="1">
    <location>
        <position position="186"/>
    </location>
    <ligand>
        <name>ATP</name>
        <dbReference type="ChEBI" id="CHEBI:30616"/>
    </ligand>
</feature>
<feature type="binding site" evidence="1">
    <location>
        <position position="300"/>
    </location>
    <ligand>
        <name>ATP</name>
        <dbReference type="ChEBI" id="CHEBI:30616"/>
    </ligand>
</feature>
<feature type="binding site" evidence="1">
    <location>
        <position position="312"/>
    </location>
    <ligand>
        <name>ATP</name>
        <dbReference type="ChEBI" id="CHEBI:30616"/>
    </ligand>
</feature>
<feature type="binding site" evidence="1">
    <location>
        <position position="314"/>
    </location>
    <ligand>
        <name>ATP</name>
        <dbReference type="ChEBI" id="CHEBI:30616"/>
    </ligand>
</feature>
<proteinExistence type="evidence at protein level"/>